<reference key="1">
    <citation type="journal article" date="2002" name="Mol. Hum. Reprod.">
        <title>Cloning and characterization of a human orthologue of testis-specific succinyl CoA:3-oxo acid CoA transferase (Scot-t) cDNA.</title>
        <authorList>
            <person name="Tanaka H."/>
            <person name="Kohroki J."/>
            <person name="Iguchi N."/>
            <person name="Onishi M."/>
            <person name="Nishimune Y."/>
        </authorList>
    </citation>
    <scope>NUCLEOTIDE SEQUENCE [MRNA]</scope>
    <scope>SUBCELLULAR LOCATION</scope>
    <scope>TISSUE SPECIFICITY</scope>
</reference>
<reference key="2">
    <citation type="submission" date="2006-11" db="EMBL/GenBank/DDBJ databases">
        <authorList>
            <person name="Kohroki J."/>
            <person name="Tanaka H."/>
        </authorList>
    </citation>
    <scope>SEQUENCE REVISION TO 352</scope>
</reference>
<reference key="3">
    <citation type="submission" date="2000-11" db="EMBL/GenBank/DDBJ databases">
        <title>Cloning and characterization of FKSG25, a novel gene located on human chromosome 1p34.</title>
        <authorList>
            <person name="Wang Y.-G."/>
            <person name="Gong L."/>
        </authorList>
    </citation>
    <scope>NUCLEOTIDE SEQUENCE [MRNA]</scope>
</reference>
<reference key="4">
    <citation type="journal article" date="2004" name="Nat. Genet.">
        <title>Complete sequencing and characterization of 21,243 full-length human cDNAs.</title>
        <authorList>
            <person name="Ota T."/>
            <person name="Suzuki Y."/>
            <person name="Nishikawa T."/>
            <person name="Otsuki T."/>
            <person name="Sugiyama T."/>
            <person name="Irie R."/>
            <person name="Wakamatsu A."/>
            <person name="Hayashi K."/>
            <person name="Sato H."/>
            <person name="Nagai K."/>
            <person name="Kimura K."/>
            <person name="Makita H."/>
            <person name="Sekine M."/>
            <person name="Obayashi M."/>
            <person name="Nishi T."/>
            <person name="Shibahara T."/>
            <person name="Tanaka T."/>
            <person name="Ishii S."/>
            <person name="Yamamoto J."/>
            <person name="Saito K."/>
            <person name="Kawai Y."/>
            <person name="Isono Y."/>
            <person name="Nakamura Y."/>
            <person name="Nagahari K."/>
            <person name="Murakami K."/>
            <person name="Yasuda T."/>
            <person name="Iwayanagi T."/>
            <person name="Wagatsuma M."/>
            <person name="Shiratori A."/>
            <person name="Sudo H."/>
            <person name="Hosoiri T."/>
            <person name="Kaku Y."/>
            <person name="Kodaira H."/>
            <person name="Kondo H."/>
            <person name="Sugawara M."/>
            <person name="Takahashi M."/>
            <person name="Kanda K."/>
            <person name="Yokoi T."/>
            <person name="Furuya T."/>
            <person name="Kikkawa E."/>
            <person name="Omura Y."/>
            <person name="Abe K."/>
            <person name="Kamihara K."/>
            <person name="Katsuta N."/>
            <person name="Sato K."/>
            <person name="Tanikawa M."/>
            <person name="Yamazaki M."/>
            <person name="Ninomiya K."/>
            <person name="Ishibashi T."/>
            <person name="Yamashita H."/>
            <person name="Murakawa K."/>
            <person name="Fujimori K."/>
            <person name="Tanai H."/>
            <person name="Kimata M."/>
            <person name="Watanabe M."/>
            <person name="Hiraoka S."/>
            <person name="Chiba Y."/>
            <person name="Ishida S."/>
            <person name="Ono Y."/>
            <person name="Takiguchi S."/>
            <person name="Watanabe S."/>
            <person name="Yosida M."/>
            <person name="Hotuta T."/>
            <person name="Kusano J."/>
            <person name="Kanehori K."/>
            <person name="Takahashi-Fujii A."/>
            <person name="Hara H."/>
            <person name="Tanase T.-O."/>
            <person name="Nomura Y."/>
            <person name="Togiya S."/>
            <person name="Komai F."/>
            <person name="Hara R."/>
            <person name="Takeuchi K."/>
            <person name="Arita M."/>
            <person name="Imose N."/>
            <person name="Musashino K."/>
            <person name="Yuuki H."/>
            <person name="Oshima A."/>
            <person name="Sasaki N."/>
            <person name="Aotsuka S."/>
            <person name="Yoshikawa Y."/>
            <person name="Matsunawa H."/>
            <person name="Ichihara T."/>
            <person name="Shiohata N."/>
            <person name="Sano S."/>
            <person name="Moriya S."/>
            <person name="Momiyama H."/>
            <person name="Satoh N."/>
            <person name="Takami S."/>
            <person name="Terashima Y."/>
            <person name="Suzuki O."/>
            <person name="Nakagawa S."/>
            <person name="Senoh A."/>
            <person name="Mizoguchi H."/>
            <person name="Goto Y."/>
            <person name="Shimizu F."/>
            <person name="Wakebe H."/>
            <person name="Hishigaki H."/>
            <person name="Watanabe T."/>
            <person name="Sugiyama A."/>
            <person name="Takemoto M."/>
            <person name="Kawakami B."/>
            <person name="Yamazaki M."/>
            <person name="Watanabe K."/>
            <person name="Kumagai A."/>
            <person name="Itakura S."/>
            <person name="Fukuzumi Y."/>
            <person name="Fujimori Y."/>
            <person name="Komiyama M."/>
            <person name="Tashiro H."/>
            <person name="Tanigami A."/>
            <person name="Fujiwara T."/>
            <person name="Ono T."/>
            <person name="Yamada K."/>
            <person name="Fujii Y."/>
            <person name="Ozaki K."/>
            <person name="Hirao M."/>
            <person name="Ohmori Y."/>
            <person name="Kawabata A."/>
            <person name="Hikiji T."/>
            <person name="Kobatake N."/>
            <person name="Inagaki H."/>
            <person name="Ikema Y."/>
            <person name="Okamoto S."/>
            <person name="Okitani R."/>
            <person name="Kawakami T."/>
            <person name="Noguchi S."/>
            <person name="Itoh T."/>
            <person name="Shigeta K."/>
            <person name="Senba T."/>
            <person name="Matsumura K."/>
            <person name="Nakajima Y."/>
            <person name="Mizuno T."/>
            <person name="Morinaga M."/>
            <person name="Sasaki M."/>
            <person name="Togashi T."/>
            <person name="Oyama M."/>
            <person name="Hata H."/>
            <person name="Watanabe M."/>
            <person name="Komatsu T."/>
            <person name="Mizushima-Sugano J."/>
            <person name="Satoh T."/>
            <person name="Shirai Y."/>
            <person name="Takahashi Y."/>
            <person name="Nakagawa K."/>
            <person name="Okumura K."/>
            <person name="Nagase T."/>
            <person name="Nomura N."/>
            <person name="Kikuchi H."/>
            <person name="Masuho Y."/>
            <person name="Yamashita R."/>
            <person name="Nakai K."/>
            <person name="Yada T."/>
            <person name="Nakamura Y."/>
            <person name="Ohara O."/>
            <person name="Isogai T."/>
            <person name="Sugano S."/>
        </authorList>
    </citation>
    <scope>NUCLEOTIDE SEQUENCE [LARGE SCALE MRNA]</scope>
    <source>
        <tissue>Testis</tissue>
    </source>
</reference>
<reference key="5">
    <citation type="journal article" date="2006" name="Nature">
        <title>The DNA sequence and biological annotation of human chromosome 1.</title>
        <authorList>
            <person name="Gregory S.G."/>
            <person name="Barlow K.F."/>
            <person name="McLay K.E."/>
            <person name="Kaul R."/>
            <person name="Swarbreck D."/>
            <person name="Dunham A."/>
            <person name="Scott C.E."/>
            <person name="Howe K.L."/>
            <person name="Woodfine K."/>
            <person name="Spencer C.C.A."/>
            <person name="Jones M.C."/>
            <person name="Gillson C."/>
            <person name="Searle S."/>
            <person name="Zhou Y."/>
            <person name="Kokocinski F."/>
            <person name="McDonald L."/>
            <person name="Evans R."/>
            <person name="Phillips K."/>
            <person name="Atkinson A."/>
            <person name="Cooper R."/>
            <person name="Jones C."/>
            <person name="Hall R.E."/>
            <person name="Andrews T.D."/>
            <person name="Lloyd C."/>
            <person name="Ainscough R."/>
            <person name="Almeida J.P."/>
            <person name="Ambrose K.D."/>
            <person name="Anderson F."/>
            <person name="Andrew R.W."/>
            <person name="Ashwell R.I.S."/>
            <person name="Aubin K."/>
            <person name="Babbage A.K."/>
            <person name="Bagguley C.L."/>
            <person name="Bailey J."/>
            <person name="Beasley H."/>
            <person name="Bethel G."/>
            <person name="Bird C.P."/>
            <person name="Bray-Allen S."/>
            <person name="Brown J.Y."/>
            <person name="Brown A.J."/>
            <person name="Buckley D."/>
            <person name="Burton J."/>
            <person name="Bye J."/>
            <person name="Carder C."/>
            <person name="Chapman J.C."/>
            <person name="Clark S.Y."/>
            <person name="Clarke G."/>
            <person name="Clee C."/>
            <person name="Cobley V."/>
            <person name="Collier R.E."/>
            <person name="Corby N."/>
            <person name="Coville G.J."/>
            <person name="Davies J."/>
            <person name="Deadman R."/>
            <person name="Dunn M."/>
            <person name="Earthrowl M."/>
            <person name="Ellington A.G."/>
            <person name="Errington H."/>
            <person name="Frankish A."/>
            <person name="Frankland J."/>
            <person name="French L."/>
            <person name="Garner P."/>
            <person name="Garnett J."/>
            <person name="Gay L."/>
            <person name="Ghori M.R.J."/>
            <person name="Gibson R."/>
            <person name="Gilby L.M."/>
            <person name="Gillett W."/>
            <person name="Glithero R.J."/>
            <person name="Grafham D.V."/>
            <person name="Griffiths C."/>
            <person name="Griffiths-Jones S."/>
            <person name="Grocock R."/>
            <person name="Hammond S."/>
            <person name="Harrison E.S.I."/>
            <person name="Hart E."/>
            <person name="Haugen E."/>
            <person name="Heath P.D."/>
            <person name="Holmes S."/>
            <person name="Holt K."/>
            <person name="Howden P.J."/>
            <person name="Hunt A.R."/>
            <person name="Hunt S.E."/>
            <person name="Hunter G."/>
            <person name="Isherwood J."/>
            <person name="James R."/>
            <person name="Johnson C."/>
            <person name="Johnson D."/>
            <person name="Joy A."/>
            <person name="Kay M."/>
            <person name="Kershaw J.K."/>
            <person name="Kibukawa M."/>
            <person name="Kimberley A.M."/>
            <person name="King A."/>
            <person name="Knights A.J."/>
            <person name="Lad H."/>
            <person name="Laird G."/>
            <person name="Lawlor S."/>
            <person name="Leongamornlert D.A."/>
            <person name="Lloyd D.M."/>
            <person name="Loveland J."/>
            <person name="Lovell J."/>
            <person name="Lush M.J."/>
            <person name="Lyne R."/>
            <person name="Martin S."/>
            <person name="Mashreghi-Mohammadi M."/>
            <person name="Matthews L."/>
            <person name="Matthews N.S.W."/>
            <person name="McLaren S."/>
            <person name="Milne S."/>
            <person name="Mistry S."/>
            <person name="Moore M.J.F."/>
            <person name="Nickerson T."/>
            <person name="O'Dell C.N."/>
            <person name="Oliver K."/>
            <person name="Palmeiri A."/>
            <person name="Palmer S.A."/>
            <person name="Parker A."/>
            <person name="Patel D."/>
            <person name="Pearce A.V."/>
            <person name="Peck A.I."/>
            <person name="Pelan S."/>
            <person name="Phelps K."/>
            <person name="Phillimore B.J."/>
            <person name="Plumb R."/>
            <person name="Rajan J."/>
            <person name="Raymond C."/>
            <person name="Rouse G."/>
            <person name="Saenphimmachak C."/>
            <person name="Sehra H.K."/>
            <person name="Sheridan E."/>
            <person name="Shownkeen R."/>
            <person name="Sims S."/>
            <person name="Skuce C.D."/>
            <person name="Smith M."/>
            <person name="Steward C."/>
            <person name="Subramanian S."/>
            <person name="Sycamore N."/>
            <person name="Tracey A."/>
            <person name="Tromans A."/>
            <person name="Van Helmond Z."/>
            <person name="Wall M."/>
            <person name="Wallis J.M."/>
            <person name="White S."/>
            <person name="Whitehead S.L."/>
            <person name="Wilkinson J.E."/>
            <person name="Willey D.L."/>
            <person name="Williams H."/>
            <person name="Wilming L."/>
            <person name="Wray P.W."/>
            <person name="Wu Z."/>
            <person name="Coulson A."/>
            <person name="Vaudin M."/>
            <person name="Sulston J.E."/>
            <person name="Durbin R.M."/>
            <person name="Hubbard T."/>
            <person name="Wooster R."/>
            <person name="Dunham I."/>
            <person name="Carter N.P."/>
            <person name="McVean G."/>
            <person name="Ross M.T."/>
            <person name="Harrow J."/>
            <person name="Olson M.V."/>
            <person name="Beck S."/>
            <person name="Rogers J."/>
            <person name="Bentley D.R."/>
        </authorList>
    </citation>
    <scope>NUCLEOTIDE SEQUENCE [LARGE SCALE GENOMIC DNA]</scope>
</reference>
<feature type="transit peptide" description="Mitochondrion" evidence="1">
    <location>
        <begin position="1"/>
        <end position="39"/>
    </location>
</feature>
<feature type="chain" id="PRO_0000002416" description="Succinyl-CoA:3-ketoacid coenzyme A transferase 2, mitochondrial">
    <location>
        <begin position="40"/>
        <end position="517"/>
    </location>
</feature>
<feature type="active site" description="5-glutamyl coenzyme A thioester intermediate" evidence="2">
    <location>
        <position position="341"/>
    </location>
</feature>
<feature type="sequence variant" id="VAR_059134" description="In dbSNP:rs7542609.">
    <original>E</original>
    <variation>D</variation>
    <location>
        <position position="250"/>
    </location>
</feature>
<feature type="sequence variant" id="VAR_059135" description="In dbSNP:rs230321.">
    <original>L</original>
    <variation>R</variation>
    <location>
        <position position="285"/>
    </location>
</feature>
<feature type="sequence conflict" description="In Ref. 4; BAG37161." evidence="4" ref="4">
    <original>L</original>
    <variation>P</variation>
    <location>
        <position position="38"/>
    </location>
</feature>
<feature type="sequence conflict" description="In Ref. 4; BAG37161." evidence="4" ref="4">
    <original>E</original>
    <variation>G</variation>
    <location>
        <position position="355"/>
    </location>
</feature>
<feature type="sequence conflict" description="In Ref. 4; BAG37161." evidence="4" ref="4">
    <original>E</original>
    <variation>G</variation>
    <location>
        <position position="480"/>
    </location>
</feature>
<feature type="sequence conflict" description="In Ref. 4; BAG37161." evidence="4" ref="4">
    <original>E</original>
    <variation>G</variation>
    <location>
        <position position="488"/>
    </location>
</feature>
<keyword id="KW-0496">Mitochondrion</keyword>
<keyword id="KW-1267">Proteomics identification</keyword>
<keyword id="KW-1185">Reference proteome</keyword>
<keyword id="KW-0808">Transferase</keyword>
<keyword id="KW-0809">Transit peptide</keyword>
<evidence type="ECO:0000250" key="1"/>
<evidence type="ECO:0000255" key="2">
    <source>
        <dbReference type="PROSITE-ProRule" id="PRU10034"/>
    </source>
</evidence>
<evidence type="ECO:0000269" key="3">
    <source>
    </source>
</evidence>
<evidence type="ECO:0000305" key="4"/>
<gene>
    <name type="primary">OXCT2</name>
    <name type="ORF">FKSG25</name>
</gene>
<accession>Q9BYC2</accession>
<accession>B2RBB4</accession>
<accession>Q5QPK4</accession>
<accession>Q8NHR1</accession>
<accession>Q9H1I4</accession>
<proteinExistence type="evidence at protein level"/>
<name>SCOT2_HUMAN</name>
<protein>
    <recommendedName>
        <fullName>Succinyl-CoA:3-ketoacid coenzyme A transferase 2, mitochondrial</fullName>
        <ecNumber>2.8.3.5</ecNumber>
    </recommendedName>
    <alternativeName>
        <fullName>3-oxoacid CoA-transferase 2A</fullName>
    </alternativeName>
    <alternativeName>
        <fullName>Testis-specific succinyl-CoA:3-oxoacid CoA-transferase</fullName>
        <shortName>SCOT-t</shortName>
    </alternativeName>
</protein>
<organism>
    <name type="scientific">Homo sapiens</name>
    <name type="common">Human</name>
    <dbReference type="NCBI Taxonomy" id="9606"/>
    <lineage>
        <taxon>Eukaryota</taxon>
        <taxon>Metazoa</taxon>
        <taxon>Chordata</taxon>
        <taxon>Craniata</taxon>
        <taxon>Vertebrata</taxon>
        <taxon>Euteleostomi</taxon>
        <taxon>Mammalia</taxon>
        <taxon>Eutheria</taxon>
        <taxon>Euarchontoglires</taxon>
        <taxon>Primates</taxon>
        <taxon>Haplorrhini</taxon>
        <taxon>Catarrhini</taxon>
        <taxon>Hominidae</taxon>
        <taxon>Homo</taxon>
    </lineage>
</organism>
<sequence>MAALRLLASVLGRGVPAGGSGLALSQGCARCFATSPRLRAKFYADPVEMVKDISDGATVMIGGFGLCGIPENLIAALLRTRVKDLQVVSSNVGVEDFGLGLLLAARQVRRIVCSYVGENTLCESQYLAGELELELTPQGTLAERIRAGGAGVPAFYTPTGYGTLVQEGGAPIRYTPDGHLALMSQPREVREFNGDHFLLERAIRADFALVKGWKADRAGNVVFRRSARNFNVPMCKAADVTAVEVEEIVEVGAFPPEDIHVPNIYVDRVIKGQKYEKRIERLTILKEEDGDAGKEEDARTRIIRRAALEFEDGMYANLGIGIPLLASNFISPSMTVHLHSENGILGLGPFPTEDEVDADLINAGKQTVTVLPGGCFFASDDSFAMIRGGHIQLTMLGAMQVSKYGDLANWMIPGKKVKGMGGAMDLVSSQKTRVVVTMQHCTKDNTPKIMEKCTMPLTGKRCVDRIITEKAVFDVHRKKELTLRELWEGLTVDDIKKSTGCAFAVSPNLRPMQQVAP</sequence>
<comment type="function">
    <text evidence="1">Key enzyme for ketone body catabolism. Transfers the CoA moiety from succinate to acetoacetate. Formation of the enzyme-CoA intermediate proceeds via an unstable anhydride species formed between the carboxylate groups of the enzyme and substrate (By similarity).</text>
</comment>
<comment type="catalytic activity">
    <reaction evidence="2">
        <text>a 3-oxo acid + succinyl-CoA = a 3-oxoacyl-CoA + succinate</text>
        <dbReference type="Rhea" id="RHEA:24564"/>
        <dbReference type="ChEBI" id="CHEBI:30031"/>
        <dbReference type="ChEBI" id="CHEBI:35973"/>
        <dbReference type="ChEBI" id="CHEBI:57292"/>
        <dbReference type="ChEBI" id="CHEBI:90726"/>
        <dbReference type="EC" id="2.8.3.5"/>
    </reaction>
</comment>
<comment type="pathway">
    <text>Ketone metabolism; succinyl-CoA degradation; acetoacetyl-CoA from succinyl-CoA: step 1/1.</text>
</comment>
<comment type="subunit">
    <text evidence="1">Homodimer.</text>
</comment>
<comment type="interaction">
    <interactant intactId="EBI-21843684">
        <id>Q9BYC2</id>
    </interactant>
    <interactant intactId="EBI-2211703">
        <id>Q96RQ3</id>
        <label>MCCC1</label>
    </interactant>
    <organismsDiffer>false</organismsDiffer>
    <experiments>3</experiments>
</comment>
<comment type="subcellular location">
    <subcellularLocation>
        <location evidence="3">Mitochondrion</location>
    </subcellularLocation>
</comment>
<comment type="tissue specificity">
    <text evidence="3">Testis specific.</text>
</comment>
<comment type="similarity">
    <text evidence="4">Belongs to the 3-oxoacid CoA-transferase family.</text>
</comment>
<dbReference type="EC" id="2.8.3.5"/>
<dbReference type="EMBL" id="AB050193">
    <property type="protein sequence ID" value="BAB40810.2"/>
    <property type="molecule type" value="mRNA"/>
</dbReference>
<dbReference type="EMBL" id="AY013700">
    <property type="protein sequence ID" value="AAG33922.1"/>
    <property type="molecule type" value="mRNA"/>
</dbReference>
<dbReference type="EMBL" id="AK314586">
    <property type="protein sequence ID" value="BAG37161.1"/>
    <property type="molecule type" value="mRNA"/>
</dbReference>
<dbReference type="EMBL" id="AL033527">
    <property type="status" value="NOT_ANNOTATED_CDS"/>
    <property type="molecule type" value="Genomic_DNA"/>
</dbReference>
<dbReference type="CCDS" id="CCDS445.1"/>
<dbReference type="RefSeq" id="NP_071403.1">
    <property type="nucleotide sequence ID" value="NM_022120.2"/>
</dbReference>
<dbReference type="SMR" id="Q9BYC2"/>
<dbReference type="BioGRID" id="122037">
    <property type="interactions" value="43"/>
</dbReference>
<dbReference type="FunCoup" id="Q9BYC2">
    <property type="interactions" value="90"/>
</dbReference>
<dbReference type="IntAct" id="Q9BYC2">
    <property type="interactions" value="27"/>
</dbReference>
<dbReference type="STRING" id="9606.ENSP00000361914"/>
<dbReference type="GlyGen" id="Q9BYC2">
    <property type="glycosylation" value="1 site, 1 O-linked glycan (1 site)"/>
</dbReference>
<dbReference type="iPTMnet" id="Q9BYC2"/>
<dbReference type="PhosphoSitePlus" id="Q9BYC2"/>
<dbReference type="BioMuta" id="OXCT2"/>
<dbReference type="DMDM" id="48428678"/>
<dbReference type="jPOST" id="Q9BYC2"/>
<dbReference type="MassIVE" id="Q9BYC2"/>
<dbReference type="PaxDb" id="9606-ENSP00000361914"/>
<dbReference type="PeptideAtlas" id="Q9BYC2"/>
<dbReference type="ProteomicsDB" id="79610"/>
<dbReference type="Antibodypedia" id="31956">
    <property type="antibodies" value="90 antibodies from 25 providers"/>
</dbReference>
<dbReference type="DNASU" id="64064"/>
<dbReference type="Ensembl" id="ENST00000327582.5">
    <property type="protein sequence ID" value="ENSP00000361914.1"/>
    <property type="gene ID" value="ENSG00000198754.5"/>
</dbReference>
<dbReference type="GeneID" id="64064"/>
<dbReference type="KEGG" id="hsa:64064"/>
<dbReference type="MANE-Select" id="ENST00000327582.5">
    <property type="protein sequence ID" value="ENSP00000361914.1"/>
    <property type="RefSeq nucleotide sequence ID" value="NM_022120.2"/>
    <property type="RefSeq protein sequence ID" value="NP_071403.1"/>
</dbReference>
<dbReference type="UCSC" id="uc001ceb.2">
    <property type="organism name" value="human"/>
</dbReference>
<dbReference type="AGR" id="HGNC:18606"/>
<dbReference type="CTD" id="64064"/>
<dbReference type="GeneCards" id="OXCT2"/>
<dbReference type="HGNC" id="HGNC:18606">
    <property type="gene designation" value="OXCT2"/>
</dbReference>
<dbReference type="HPA" id="ENSG00000198754">
    <property type="expression patterns" value="Tissue enriched (testis)"/>
</dbReference>
<dbReference type="MIM" id="610289">
    <property type="type" value="gene"/>
</dbReference>
<dbReference type="neXtProt" id="NX_Q9BYC2"/>
<dbReference type="OpenTargets" id="ENSG00000198754"/>
<dbReference type="PharmGKB" id="PA38360"/>
<dbReference type="VEuPathDB" id="HostDB:ENSG00000198754"/>
<dbReference type="eggNOG" id="KOG3822">
    <property type="taxonomic scope" value="Eukaryota"/>
</dbReference>
<dbReference type="GeneTree" id="ENSGT00390000009130"/>
<dbReference type="HOGENOM" id="CLU_019942_1_3_1"/>
<dbReference type="InParanoid" id="Q9BYC2"/>
<dbReference type="OMA" id="MQVNQFG"/>
<dbReference type="OrthoDB" id="1933379at2759"/>
<dbReference type="PAN-GO" id="Q9BYC2">
    <property type="GO annotations" value="3 GO annotations based on evolutionary models"/>
</dbReference>
<dbReference type="PhylomeDB" id="Q9BYC2"/>
<dbReference type="TreeFam" id="TF313991"/>
<dbReference type="BRENDA" id="2.8.3.5">
    <property type="organism ID" value="2681"/>
</dbReference>
<dbReference type="PathwayCommons" id="Q9BYC2"/>
<dbReference type="Reactome" id="R-HSA-77108">
    <property type="pathway name" value="Utilization of Ketone Bodies"/>
</dbReference>
<dbReference type="SignaLink" id="Q9BYC2"/>
<dbReference type="UniPathway" id="UPA00929">
    <property type="reaction ID" value="UER00894"/>
</dbReference>
<dbReference type="BioGRID-ORCS" id="64064">
    <property type="hits" value="60 hits in 1108 CRISPR screens"/>
</dbReference>
<dbReference type="GenomeRNAi" id="64064"/>
<dbReference type="Pharos" id="Q9BYC2">
    <property type="development level" value="Tbio"/>
</dbReference>
<dbReference type="PRO" id="PR:Q9BYC2"/>
<dbReference type="Proteomes" id="UP000005640">
    <property type="component" value="Chromosome 1"/>
</dbReference>
<dbReference type="RNAct" id="Q9BYC2">
    <property type="molecule type" value="protein"/>
</dbReference>
<dbReference type="Bgee" id="ENSG00000198754">
    <property type="expression patterns" value="Expressed in male germ line stem cell (sensu Vertebrata) in testis and 94 other cell types or tissues"/>
</dbReference>
<dbReference type="GO" id="GO:0005759">
    <property type="term" value="C:mitochondrial matrix"/>
    <property type="evidence" value="ECO:0000304"/>
    <property type="project" value="Reactome"/>
</dbReference>
<dbReference type="GO" id="GO:0005739">
    <property type="term" value="C:mitochondrion"/>
    <property type="evidence" value="ECO:0000314"/>
    <property type="project" value="MGI"/>
</dbReference>
<dbReference type="GO" id="GO:0031514">
    <property type="term" value="C:motile cilium"/>
    <property type="evidence" value="ECO:0000314"/>
    <property type="project" value="MGI"/>
</dbReference>
<dbReference type="GO" id="GO:0008260">
    <property type="term" value="F:succinyl-CoA:3-oxo-acid CoA-transferase activity"/>
    <property type="evidence" value="ECO:0000318"/>
    <property type="project" value="GO_Central"/>
</dbReference>
<dbReference type="GO" id="GO:0046952">
    <property type="term" value="P:ketone body catabolic process"/>
    <property type="evidence" value="ECO:0007669"/>
    <property type="project" value="InterPro"/>
</dbReference>
<dbReference type="GO" id="GO:1902224">
    <property type="term" value="P:ketone body metabolic process"/>
    <property type="evidence" value="ECO:0000318"/>
    <property type="project" value="GO_Central"/>
</dbReference>
<dbReference type="FunFam" id="3.40.1080.10:FF:000001">
    <property type="entry name" value="Succinyl-coa:3-ketoacid-coenzyme a transferase subunit b"/>
    <property type="match status" value="1"/>
</dbReference>
<dbReference type="FunFam" id="3.40.1080.10:FF:000002">
    <property type="entry name" value="Succinyl-CoA:3-ketoacid-coenzyme A transferase, mitochondrial"/>
    <property type="match status" value="1"/>
</dbReference>
<dbReference type="Gene3D" id="3.40.1080.10">
    <property type="entry name" value="Glutaconate Coenzyme A-transferase"/>
    <property type="match status" value="2"/>
</dbReference>
<dbReference type="InterPro" id="IPR012792">
    <property type="entry name" value="3-oxoacid_CoA-transf_A"/>
</dbReference>
<dbReference type="InterPro" id="IPR012791">
    <property type="entry name" value="3-oxoacid_CoA-transf_B"/>
</dbReference>
<dbReference type="InterPro" id="IPR014388">
    <property type="entry name" value="3-oxoacid_CoA-transferase"/>
</dbReference>
<dbReference type="InterPro" id="IPR004165">
    <property type="entry name" value="CoA_trans_fam_I"/>
</dbReference>
<dbReference type="InterPro" id="IPR004164">
    <property type="entry name" value="CoA_transf_AS"/>
</dbReference>
<dbReference type="InterPro" id="IPR004163">
    <property type="entry name" value="CoA_transf_BS"/>
</dbReference>
<dbReference type="InterPro" id="IPR037171">
    <property type="entry name" value="NagB/RpiA_transferase-like"/>
</dbReference>
<dbReference type="NCBIfam" id="TIGR02429">
    <property type="entry name" value="pcaI_scoA_fam"/>
    <property type="match status" value="1"/>
</dbReference>
<dbReference type="NCBIfam" id="TIGR02428">
    <property type="entry name" value="pcaJ_scoB_fam"/>
    <property type="match status" value="1"/>
</dbReference>
<dbReference type="PANTHER" id="PTHR13707">
    <property type="entry name" value="KETOACID-COENZYME A TRANSFERASE"/>
    <property type="match status" value="1"/>
</dbReference>
<dbReference type="PANTHER" id="PTHR13707:SF28">
    <property type="entry name" value="SUCCINYL-COA:3-KETOACID COENZYME A TRANSFERASE 2, MITOCHONDRIAL"/>
    <property type="match status" value="1"/>
</dbReference>
<dbReference type="Pfam" id="PF01144">
    <property type="entry name" value="CoA_trans"/>
    <property type="match status" value="2"/>
</dbReference>
<dbReference type="PIRSF" id="PIRSF000858">
    <property type="entry name" value="SCOT-t"/>
    <property type="match status" value="1"/>
</dbReference>
<dbReference type="SMART" id="SM00882">
    <property type="entry name" value="CoA_trans"/>
    <property type="match status" value="2"/>
</dbReference>
<dbReference type="SUPFAM" id="SSF100950">
    <property type="entry name" value="NagB/RpiA/CoA transferase-like"/>
    <property type="match status" value="2"/>
</dbReference>
<dbReference type="PROSITE" id="PS01273">
    <property type="entry name" value="COA_TRANSF_1"/>
    <property type="match status" value="1"/>
</dbReference>
<dbReference type="PROSITE" id="PS01274">
    <property type="entry name" value="COA_TRANSF_2"/>
    <property type="match status" value="1"/>
</dbReference>